<comment type="function">
    <text>Transcriptional activator for the cbb operon for RuBisCO and other Calvin cycle genes.</text>
</comment>
<comment type="similarity">
    <text evidence="2">Belongs to the LysR transcriptional regulatory family.</text>
</comment>
<keyword id="KW-0010">Activator</keyword>
<keyword id="KW-0238">DNA-binding</keyword>
<keyword id="KW-0804">Transcription</keyword>
<keyword id="KW-0805">Transcription regulation</keyword>
<accession>P52595</accession>
<evidence type="ECO:0000255" key="1">
    <source>
        <dbReference type="PROSITE-ProRule" id="PRU00253"/>
    </source>
</evidence>
<evidence type="ECO:0000305" key="2"/>
<protein>
    <recommendedName>
        <fullName>HTH-type transcriptional regulator CbbR</fullName>
    </recommendedName>
    <alternativeName>
        <fullName>RuBisCO operon transcriptional regulator</fullName>
    </alternativeName>
</protein>
<feature type="chain" id="PRO_0000105606" description="HTH-type transcriptional regulator CbbR">
    <location>
        <begin position="1"/>
        <end position="298"/>
    </location>
</feature>
<feature type="domain" description="HTH lysR-type" evidence="1">
    <location>
        <begin position="7"/>
        <end position="64"/>
    </location>
</feature>
<feature type="DNA-binding region" description="H-T-H motif" evidence="1">
    <location>
        <begin position="24"/>
        <end position="43"/>
    </location>
</feature>
<reference key="1">
    <citation type="journal article" date="1993" name="J. Bacteriol.">
        <title>Complementation analysis and regulation of CO2 fixation gene expression in a ribulose 1,5-bisphosphate carboxylase-oxygenase deletion strain of Rhodospirillum rubrum.</title>
        <authorList>
            <person name="Falcone D.L."/>
            <person name="Tabita F.R."/>
        </authorList>
    </citation>
    <scope>NUCLEOTIDE SEQUENCE [GENOMIC DNA]</scope>
    <source>
        <strain>STR-2</strain>
    </source>
</reference>
<gene>
    <name type="primary">cbbR</name>
</gene>
<sequence length="298" mass="32569">MIRHAPRHLRQMQIFDAVARHLSFSNAARELGLTQPAVSLQIKQIEALAGLPLFEQMGRVLLLTQAGTILLGHVRTILAAVTDADKAMDALKGKRAGALRIGVVSTAKYFAPRLLSVFTAGYPGVELGLTVANREQILGMIQENALDLFIMGRPPTEPAVRAELAPNPMVMVAASDHLVRRKLTFHDLSGETFLMREPGSGTRILMEKLMTDHGVLPHRMIEMSSNETIKQAVMAGMGISLLSRNTMSLELSVGRLVILDVEGLPIQRDWYVVIREGKHLAPVAEAMVAFLKAAARTC</sequence>
<name>CBBR_RHORU</name>
<dbReference type="EMBL" id="S64484">
    <property type="protein sequence ID" value="AAB27779.1"/>
    <property type="molecule type" value="Genomic_DNA"/>
</dbReference>
<dbReference type="PIR" id="B53305">
    <property type="entry name" value="B53305"/>
</dbReference>
<dbReference type="SMR" id="P52595"/>
<dbReference type="GO" id="GO:0003700">
    <property type="term" value="F:DNA-binding transcription factor activity"/>
    <property type="evidence" value="ECO:0007669"/>
    <property type="project" value="InterPro"/>
</dbReference>
<dbReference type="GO" id="GO:0000976">
    <property type="term" value="F:transcription cis-regulatory region binding"/>
    <property type="evidence" value="ECO:0007669"/>
    <property type="project" value="TreeGrafter"/>
</dbReference>
<dbReference type="CDD" id="cd08419">
    <property type="entry name" value="PBP2_CbbR_RubisCO_like"/>
    <property type="match status" value="1"/>
</dbReference>
<dbReference type="FunFam" id="1.10.10.10:FF:000001">
    <property type="entry name" value="LysR family transcriptional regulator"/>
    <property type="match status" value="1"/>
</dbReference>
<dbReference type="Gene3D" id="3.40.190.10">
    <property type="entry name" value="Periplasmic binding protein-like II"/>
    <property type="match status" value="2"/>
</dbReference>
<dbReference type="Gene3D" id="1.10.10.10">
    <property type="entry name" value="Winged helix-like DNA-binding domain superfamily/Winged helix DNA-binding domain"/>
    <property type="match status" value="1"/>
</dbReference>
<dbReference type="InterPro" id="IPR005119">
    <property type="entry name" value="LysR_subst-bd"/>
</dbReference>
<dbReference type="InterPro" id="IPR000847">
    <property type="entry name" value="Tscrpt_reg_HTH_LysR"/>
</dbReference>
<dbReference type="InterPro" id="IPR036388">
    <property type="entry name" value="WH-like_DNA-bd_sf"/>
</dbReference>
<dbReference type="InterPro" id="IPR036390">
    <property type="entry name" value="WH_DNA-bd_sf"/>
</dbReference>
<dbReference type="PANTHER" id="PTHR30126:SF5">
    <property type="entry name" value="HTH-TYPE TRANSCRIPTIONAL ACTIVATOR CMPR"/>
    <property type="match status" value="1"/>
</dbReference>
<dbReference type="PANTHER" id="PTHR30126">
    <property type="entry name" value="HTH-TYPE TRANSCRIPTIONAL REGULATOR"/>
    <property type="match status" value="1"/>
</dbReference>
<dbReference type="Pfam" id="PF00126">
    <property type="entry name" value="HTH_1"/>
    <property type="match status" value="1"/>
</dbReference>
<dbReference type="Pfam" id="PF03466">
    <property type="entry name" value="LysR_substrate"/>
    <property type="match status" value="1"/>
</dbReference>
<dbReference type="PRINTS" id="PR00039">
    <property type="entry name" value="HTHLYSR"/>
</dbReference>
<dbReference type="SUPFAM" id="SSF53850">
    <property type="entry name" value="Periplasmic binding protein-like II"/>
    <property type="match status" value="1"/>
</dbReference>
<dbReference type="SUPFAM" id="SSF46785">
    <property type="entry name" value="Winged helix' DNA-binding domain"/>
    <property type="match status" value="1"/>
</dbReference>
<dbReference type="PROSITE" id="PS50931">
    <property type="entry name" value="HTH_LYSR"/>
    <property type="match status" value="1"/>
</dbReference>
<proteinExistence type="inferred from homology"/>
<organism>
    <name type="scientific">Rhodospirillum rubrum</name>
    <dbReference type="NCBI Taxonomy" id="1085"/>
    <lineage>
        <taxon>Bacteria</taxon>
        <taxon>Pseudomonadati</taxon>
        <taxon>Pseudomonadota</taxon>
        <taxon>Alphaproteobacteria</taxon>
        <taxon>Rhodospirillales</taxon>
        <taxon>Rhodospirillaceae</taxon>
        <taxon>Rhodospirillum</taxon>
    </lineage>
</organism>